<comment type="function">
    <text evidence="1">One of the primary rRNA binding proteins, it binds directly to 16S rRNA where it helps nucleate assembly of the platform of the 30S subunit by binding and bridging several RNA helices of the 16S rRNA.</text>
</comment>
<comment type="function">
    <text evidence="1">Forms an intersubunit bridge (bridge B4) with the 23S rRNA of the 50S subunit in the ribosome.</text>
</comment>
<comment type="subunit">
    <text evidence="1">Part of the 30S ribosomal subunit. Forms a bridge to the 50S subunit in the 70S ribosome, contacting the 23S rRNA.</text>
</comment>
<comment type="similarity">
    <text evidence="1">Belongs to the universal ribosomal protein uS15 family.</text>
</comment>
<reference key="1">
    <citation type="journal article" date="2010" name="J. Bacteriol.">
        <title>Whole genome sequences of two Xylella fastidiosa strains (M12 and M23) causing almond leaf scorch disease in California.</title>
        <authorList>
            <person name="Chen J."/>
            <person name="Xie G."/>
            <person name="Han S."/>
            <person name="Chertkov O."/>
            <person name="Sims D."/>
            <person name="Civerolo E.L."/>
        </authorList>
    </citation>
    <scope>NUCLEOTIDE SEQUENCE [LARGE SCALE GENOMIC DNA]</scope>
    <source>
        <strain>M23</strain>
    </source>
</reference>
<name>RS15_XYLF2</name>
<protein>
    <recommendedName>
        <fullName evidence="1">Small ribosomal subunit protein uS15</fullName>
    </recommendedName>
    <alternativeName>
        <fullName evidence="3">30S ribosomal protein S15</fullName>
    </alternativeName>
</protein>
<proteinExistence type="inferred from homology"/>
<evidence type="ECO:0000255" key="1">
    <source>
        <dbReference type="HAMAP-Rule" id="MF_01343"/>
    </source>
</evidence>
<evidence type="ECO:0000256" key="2">
    <source>
        <dbReference type="SAM" id="MobiDB-lite"/>
    </source>
</evidence>
<evidence type="ECO:0000305" key="3"/>
<organism>
    <name type="scientific">Xylella fastidiosa (strain M23)</name>
    <dbReference type="NCBI Taxonomy" id="405441"/>
    <lineage>
        <taxon>Bacteria</taxon>
        <taxon>Pseudomonadati</taxon>
        <taxon>Pseudomonadota</taxon>
        <taxon>Gammaproteobacteria</taxon>
        <taxon>Lysobacterales</taxon>
        <taxon>Lysobacteraceae</taxon>
        <taxon>Xylella</taxon>
    </lineage>
</organism>
<dbReference type="EMBL" id="CP001011">
    <property type="protein sequence ID" value="ACB91639.1"/>
    <property type="molecule type" value="Genomic_DNA"/>
</dbReference>
<dbReference type="RefSeq" id="WP_004572949.1">
    <property type="nucleotide sequence ID" value="NC_010577.1"/>
</dbReference>
<dbReference type="SMR" id="B2I729"/>
<dbReference type="GeneID" id="93903888"/>
<dbReference type="KEGG" id="xfn:XfasM23_0182"/>
<dbReference type="HOGENOM" id="CLU_148518_1_0_6"/>
<dbReference type="Proteomes" id="UP000001698">
    <property type="component" value="Chromosome"/>
</dbReference>
<dbReference type="GO" id="GO:0022627">
    <property type="term" value="C:cytosolic small ribosomal subunit"/>
    <property type="evidence" value="ECO:0007669"/>
    <property type="project" value="TreeGrafter"/>
</dbReference>
<dbReference type="GO" id="GO:0019843">
    <property type="term" value="F:rRNA binding"/>
    <property type="evidence" value="ECO:0007669"/>
    <property type="project" value="UniProtKB-UniRule"/>
</dbReference>
<dbReference type="GO" id="GO:0003735">
    <property type="term" value="F:structural constituent of ribosome"/>
    <property type="evidence" value="ECO:0007669"/>
    <property type="project" value="InterPro"/>
</dbReference>
<dbReference type="GO" id="GO:0006412">
    <property type="term" value="P:translation"/>
    <property type="evidence" value="ECO:0007669"/>
    <property type="project" value="UniProtKB-UniRule"/>
</dbReference>
<dbReference type="CDD" id="cd00353">
    <property type="entry name" value="Ribosomal_S15p_S13e"/>
    <property type="match status" value="1"/>
</dbReference>
<dbReference type="FunFam" id="1.10.287.10:FF:000002">
    <property type="entry name" value="30S ribosomal protein S15"/>
    <property type="match status" value="1"/>
</dbReference>
<dbReference type="Gene3D" id="6.10.250.3130">
    <property type="match status" value="1"/>
</dbReference>
<dbReference type="Gene3D" id="1.10.287.10">
    <property type="entry name" value="S15/NS1, RNA-binding"/>
    <property type="match status" value="1"/>
</dbReference>
<dbReference type="HAMAP" id="MF_01343_B">
    <property type="entry name" value="Ribosomal_uS15_B"/>
    <property type="match status" value="1"/>
</dbReference>
<dbReference type="InterPro" id="IPR000589">
    <property type="entry name" value="Ribosomal_uS15"/>
</dbReference>
<dbReference type="InterPro" id="IPR005290">
    <property type="entry name" value="Ribosomal_uS15_bac-type"/>
</dbReference>
<dbReference type="InterPro" id="IPR009068">
    <property type="entry name" value="uS15_NS1_RNA-bd_sf"/>
</dbReference>
<dbReference type="NCBIfam" id="TIGR00952">
    <property type="entry name" value="S15_bact"/>
    <property type="match status" value="1"/>
</dbReference>
<dbReference type="PANTHER" id="PTHR23321">
    <property type="entry name" value="RIBOSOMAL PROTEIN S15, BACTERIAL AND ORGANELLAR"/>
    <property type="match status" value="1"/>
</dbReference>
<dbReference type="PANTHER" id="PTHR23321:SF26">
    <property type="entry name" value="SMALL RIBOSOMAL SUBUNIT PROTEIN US15M"/>
    <property type="match status" value="1"/>
</dbReference>
<dbReference type="Pfam" id="PF00312">
    <property type="entry name" value="Ribosomal_S15"/>
    <property type="match status" value="1"/>
</dbReference>
<dbReference type="SMART" id="SM01387">
    <property type="entry name" value="Ribosomal_S15"/>
    <property type="match status" value="1"/>
</dbReference>
<dbReference type="SUPFAM" id="SSF47060">
    <property type="entry name" value="S15/NS1 RNA-binding domain"/>
    <property type="match status" value="1"/>
</dbReference>
<dbReference type="PROSITE" id="PS00362">
    <property type="entry name" value="RIBOSOMAL_S15"/>
    <property type="match status" value="1"/>
</dbReference>
<keyword id="KW-0687">Ribonucleoprotein</keyword>
<keyword id="KW-0689">Ribosomal protein</keyword>
<keyword id="KW-0694">RNA-binding</keyword>
<keyword id="KW-0699">rRNA-binding</keyword>
<feature type="chain" id="PRO_1000143195" description="Small ribosomal subunit protein uS15">
    <location>
        <begin position="1"/>
        <end position="86"/>
    </location>
</feature>
<feature type="region of interest" description="Disordered" evidence="2">
    <location>
        <begin position="1"/>
        <end position="21"/>
    </location>
</feature>
<feature type="compositionally biased region" description="Polar residues" evidence="2">
    <location>
        <begin position="1"/>
        <end position="10"/>
    </location>
</feature>
<sequence length="86" mass="10201">MSIDTQSIIENNKRSAHDTGSPEVQVALLTARIELLTKHFKIHKKDHHSRRGLLQMVNRRRSLLDYLNKKENERYKLLIEKLGLRR</sequence>
<gene>
    <name evidence="1" type="primary">rpsO</name>
    <name type="ordered locus">XfasM23_0182</name>
</gene>
<accession>B2I729</accession>